<name>SRBP2_RAT</name>
<accession>Q3T1I5</accession>
<protein>
    <recommendedName>
        <fullName evidence="2">Sterol regulatory element-binding protein 2</fullName>
        <shortName evidence="2">SREBP-2</shortName>
    </recommendedName>
    <alternativeName>
        <fullName evidence="2">Sterol regulatory element-binding transcription factor 2</fullName>
    </alternativeName>
    <component>
        <recommendedName>
            <fullName evidence="7">Processed sterol regulatory element-binding protein 2</fullName>
        </recommendedName>
        <alternativeName>
            <fullName evidence="7">Transcription factor SREBF2</fullName>
        </alternativeName>
    </component>
</protein>
<evidence type="ECO:0000250" key="1">
    <source>
        <dbReference type="UniProtKB" id="P36956"/>
    </source>
</evidence>
<evidence type="ECO:0000250" key="2">
    <source>
        <dbReference type="UniProtKB" id="Q12772"/>
    </source>
</evidence>
<evidence type="ECO:0000250" key="3">
    <source>
        <dbReference type="UniProtKB" id="Q3U1N2"/>
    </source>
</evidence>
<evidence type="ECO:0000255" key="4"/>
<evidence type="ECO:0000255" key="5">
    <source>
        <dbReference type="PROSITE-ProRule" id="PRU00981"/>
    </source>
</evidence>
<evidence type="ECO:0000256" key="6">
    <source>
        <dbReference type="SAM" id="MobiDB-lite"/>
    </source>
</evidence>
<evidence type="ECO:0000305" key="7"/>
<evidence type="ECO:0000312" key="8">
    <source>
        <dbReference type="RGD" id="1307751"/>
    </source>
</evidence>
<dbReference type="EMBL" id="BC101902">
    <property type="protein sequence ID" value="AAI01903.1"/>
    <property type="molecule type" value="mRNA"/>
</dbReference>
<dbReference type="RefSeq" id="NP_001028866.1">
    <property type="nucleotide sequence ID" value="NM_001033694.1"/>
</dbReference>
<dbReference type="SMR" id="Q3T1I5"/>
<dbReference type="FunCoup" id="Q3T1I5">
    <property type="interactions" value="2170"/>
</dbReference>
<dbReference type="STRING" id="10116.ENSRNOP00000052893"/>
<dbReference type="GlyGen" id="Q3T1I5">
    <property type="glycosylation" value="1 site"/>
</dbReference>
<dbReference type="PhosphoSitePlus" id="Q3T1I5"/>
<dbReference type="PaxDb" id="10116-ENSRNOP00000052893"/>
<dbReference type="GeneID" id="300095"/>
<dbReference type="KEGG" id="rno:300095"/>
<dbReference type="UCSC" id="RGD:1307751">
    <property type="organism name" value="rat"/>
</dbReference>
<dbReference type="AGR" id="RGD:1307751"/>
<dbReference type="CTD" id="6721"/>
<dbReference type="RGD" id="1307751">
    <property type="gene designation" value="Srebf2"/>
</dbReference>
<dbReference type="eggNOG" id="KOG2588">
    <property type="taxonomic scope" value="Eukaryota"/>
</dbReference>
<dbReference type="InParanoid" id="Q3T1I5"/>
<dbReference type="OrthoDB" id="2133190at2759"/>
<dbReference type="PhylomeDB" id="Q3T1I5"/>
<dbReference type="Reactome" id="R-RNO-1655829">
    <property type="pathway name" value="Regulation of cholesterol biosynthesis by SREBP (SREBF)"/>
</dbReference>
<dbReference type="Reactome" id="R-RNO-191273">
    <property type="pathway name" value="Cholesterol biosynthesis"/>
</dbReference>
<dbReference type="PRO" id="PR:Q3T1I5"/>
<dbReference type="Proteomes" id="UP000002494">
    <property type="component" value="Unplaced"/>
</dbReference>
<dbReference type="GO" id="GO:0005737">
    <property type="term" value="C:cytoplasm"/>
    <property type="evidence" value="ECO:0000266"/>
    <property type="project" value="RGD"/>
</dbReference>
<dbReference type="GO" id="GO:0030425">
    <property type="term" value="C:dendrite"/>
    <property type="evidence" value="ECO:0000314"/>
    <property type="project" value="RGD"/>
</dbReference>
<dbReference type="GO" id="GO:0005783">
    <property type="term" value="C:endoplasmic reticulum"/>
    <property type="evidence" value="ECO:0000266"/>
    <property type="project" value="RGD"/>
</dbReference>
<dbReference type="GO" id="GO:0012507">
    <property type="term" value="C:ER to Golgi transport vesicle membrane"/>
    <property type="evidence" value="ECO:0007669"/>
    <property type="project" value="UniProtKB-SubCell"/>
</dbReference>
<dbReference type="GO" id="GO:0000139">
    <property type="term" value="C:Golgi membrane"/>
    <property type="evidence" value="ECO:0007669"/>
    <property type="project" value="UniProtKB-SubCell"/>
</dbReference>
<dbReference type="GO" id="GO:0016020">
    <property type="term" value="C:membrane"/>
    <property type="evidence" value="ECO:0000266"/>
    <property type="project" value="RGD"/>
</dbReference>
<dbReference type="GO" id="GO:0005634">
    <property type="term" value="C:nucleus"/>
    <property type="evidence" value="ECO:0000266"/>
    <property type="project" value="RGD"/>
</dbReference>
<dbReference type="GO" id="GO:0032937">
    <property type="term" value="C:SREBP-SCAP-Insig complex"/>
    <property type="evidence" value="ECO:0000266"/>
    <property type="project" value="RGD"/>
</dbReference>
<dbReference type="GO" id="GO:0003682">
    <property type="term" value="F:chromatin binding"/>
    <property type="evidence" value="ECO:0000314"/>
    <property type="project" value="RGD"/>
</dbReference>
<dbReference type="GO" id="GO:0003677">
    <property type="term" value="F:DNA binding"/>
    <property type="evidence" value="ECO:0000266"/>
    <property type="project" value="RGD"/>
</dbReference>
<dbReference type="GO" id="GO:0003700">
    <property type="term" value="F:DNA-binding transcription factor activity"/>
    <property type="evidence" value="ECO:0000266"/>
    <property type="project" value="RGD"/>
</dbReference>
<dbReference type="GO" id="GO:0000981">
    <property type="term" value="F:DNA-binding transcription factor activity, RNA polymerase II-specific"/>
    <property type="evidence" value="ECO:0000266"/>
    <property type="project" value="RGD"/>
</dbReference>
<dbReference type="GO" id="GO:0001227">
    <property type="term" value="F:DNA-binding transcription repressor activity, RNA polymerase II-specific"/>
    <property type="evidence" value="ECO:0000266"/>
    <property type="project" value="RGD"/>
</dbReference>
<dbReference type="GO" id="GO:0070888">
    <property type="term" value="F:E-box binding"/>
    <property type="evidence" value="ECO:0000266"/>
    <property type="project" value="RGD"/>
</dbReference>
<dbReference type="GO" id="GO:0046983">
    <property type="term" value="F:protein dimerization activity"/>
    <property type="evidence" value="ECO:0007669"/>
    <property type="project" value="InterPro"/>
</dbReference>
<dbReference type="GO" id="GO:0000978">
    <property type="term" value="F:RNA polymerase II cis-regulatory region sequence-specific DNA binding"/>
    <property type="evidence" value="ECO:0000266"/>
    <property type="project" value="RGD"/>
</dbReference>
<dbReference type="GO" id="GO:0043565">
    <property type="term" value="F:sequence-specific DNA binding"/>
    <property type="evidence" value="ECO:0000314"/>
    <property type="project" value="MGI"/>
</dbReference>
<dbReference type="GO" id="GO:1990837">
    <property type="term" value="F:sequence-specific double-stranded DNA binding"/>
    <property type="evidence" value="ECO:0000266"/>
    <property type="project" value="RGD"/>
</dbReference>
<dbReference type="GO" id="GO:0000976">
    <property type="term" value="F:transcription cis-regulatory region binding"/>
    <property type="evidence" value="ECO:0000266"/>
    <property type="project" value="RGD"/>
</dbReference>
<dbReference type="GO" id="GO:0071404">
    <property type="term" value="P:cellular response to low-density lipoprotein particle stimulus"/>
    <property type="evidence" value="ECO:0000266"/>
    <property type="project" value="RGD"/>
</dbReference>
<dbReference type="GO" id="GO:0009267">
    <property type="term" value="P:cellular response to starvation"/>
    <property type="evidence" value="ECO:0000266"/>
    <property type="project" value="RGD"/>
</dbReference>
<dbReference type="GO" id="GO:0042632">
    <property type="term" value="P:cholesterol homeostasis"/>
    <property type="evidence" value="ECO:0000266"/>
    <property type="project" value="RGD"/>
</dbReference>
<dbReference type="GO" id="GO:0008203">
    <property type="term" value="P:cholesterol metabolic process"/>
    <property type="evidence" value="ECO:0007669"/>
    <property type="project" value="UniProtKB-KW"/>
</dbReference>
<dbReference type="GO" id="GO:0008610">
    <property type="term" value="P:lipid biosynthetic process"/>
    <property type="evidence" value="ECO:0000304"/>
    <property type="project" value="RGD"/>
</dbReference>
<dbReference type="GO" id="GO:0090370">
    <property type="term" value="P:negative regulation of cholesterol efflux"/>
    <property type="evidence" value="ECO:0000266"/>
    <property type="project" value="RGD"/>
</dbReference>
<dbReference type="GO" id="GO:0000122">
    <property type="term" value="P:negative regulation of transcription by RNA polymerase II"/>
    <property type="evidence" value="ECO:0000266"/>
    <property type="project" value="RGD"/>
</dbReference>
<dbReference type="GO" id="GO:0045542">
    <property type="term" value="P:positive regulation of cholesterol biosynthetic process"/>
    <property type="evidence" value="ECO:0000266"/>
    <property type="project" value="RGD"/>
</dbReference>
<dbReference type="GO" id="GO:0010886">
    <property type="term" value="P:positive regulation of cholesterol storage"/>
    <property type="evidence" value="ECO:0000266"/>
    <property type="project" value="RGD"/>
</dbReference>
<dbReference type="GO" id="GO:0045893">
    <property type="term" value="P:positive regulation of DNA-templated transcription"/>
    <property type="evidence" value="ECO:0000315"/>
    <property type="project" value="RGD"/>
</dbReference>
<dbReference type="GO" id="GO:1902895">
    <property type="term" value="P:positive regulation of miRNA transcription"/>
    <property type="evidence" value="ECO:0000266"/>
    <property type="project" value="RGD"/>
</dbReference>
<dbReference type="GO" id="GO:0045944">
    <property type="term" value="P:positive regulation of transcription by RNA polymerase II"/>
    <property type="evidence" value="ECO:0000314"/>
    <property type="project" value="MGI"/>
</dbReference>
<dbReference type="GO" id="GO:0006355">
    <property type="term" value="P:regulation of DNA-templated transcription"/>
    <property type="evidence" value="ECO:0000266"/>
    <property type="project" value="RGD"/>
</dbReference>
<dbReference type="GO" id="GO:0008593">
    <property type="term" value="P:regulation of Notch signaling pathway"/>
    <property type="evidence" value="ECO:0000250"/>
    <property type="project" value="UniProtKB"/>
</dbReference>
<dbReference type="GO" id="GO:0009725">
    <property type="term" value="P:response to hormone"/>
    <property type="evidence" value="ECO:0000315"/>
    <property type="project" value="RGD"/>
</dbReference>
<dbReference type="GO" id="GO:0010288">
    <property type="term" value="P:response to lead ion"/>
    <property type="evidence" value="ECO:0000270"/>
    <property type="project" value="RGD"/>
</dbReference>
<dbReference type="GO" id="GO:0033993">
    <property type="term" value="P:response to lipid"/>
    <property type="evidence" value="ECO:0000270"/>
    <property type="project" value="RGD"/>
</dbReference>
<dbReference type="GO" id="GO:0009410">
    <property type="term" value="P:response to xenobiotic stimulus"/>
    <property type="evidence" value="ECO:0000270"/>
    <property type="project" value="RGD"/>
</dbReference>
<dbReference type="GO" id="GO:0007283">
    <property type="term" value="P:spermatogenesis"/>
    <property type="evidence" value="ECO:0000270"/>
    <property type="project" value="RGD"/>
</dbReference>
<dbReference type="GO" id="GO:0032933">
    <property type="term" value="P:SREBP signaling pathway"/>
    <property type="evidence" value="ECO:0000266"/>
    <property type="project" value="RGD"/>
</dbReference>
<dbReference type="CDD" id="cd18922">
    <property type="entry name" value="bHLHzip_SREBP2"/>
    <property type="match status" value="1"/>
</dbReference>
<dbReference type="FunFam" id="4.10.280.10:FF:000016">
    <property type="entry name" value="Sterol regulatory element-binding transcription factor 1"/>
    <property type="match status" value="1"/>
</dbReference>
<dbReference type="Gene3D" id="4.10.280.10">
    <property type="entry name" value="Helix-loop-helix DNA-binding domain"/>
    <property type="match status" value="1"/>
</dbReference>
<dbReference type="InterPro" id="IPR011598">
    <property type="entry name" value="bHLH_dom"/>
</dbReference>
<dbReference type="InterPro" id="IPR036638">
    <property type="entry name" value="HLH_DNA-bd_sf"/>
</dbReference>
<dbReference type="InterPro" id="IPR003006">
    <property type="entry name" value="Ig/MHC_CS"/>
</dbReference>
<dbReference type="PANTHER" id="PTHR46062">
    <property type="entry name" value="STEROL REGULATORY ELEMENT-BINDING PROTEIN"/>
    <property type="match status" value="1"/>
</dbReference>
<dbReference type="PANTHER" id="PTHR46062:SF3">
    <property type="entry name" value="STEROL REGULATORY ELEMENT-BINDING PROTEIN 2"/>
    <property type="match status" value="1"/>
</dbReference>
<dbReference type="Pfam" id="PF00010">
    <property type="entry name" value="HLH"/>
    <property type="match status" value="1"/>
</dbReference>
<dbReference type="SMART" id="SM00353">
    <property type="entry name" value="HLH"/>
    <property type="match status" value="1"/>
</dbReference>
<dbReference type="SUPFAM" id="SSF47459">
    <property type="entry name" value="HLH, helix-loop-helix DNA-binding domain"/>
    <property type="match status" value="1"/>
</dbReference>
<dbReference type="PROSITE" id="PS50888">
    <property type="entry name" value="BHLH"/>
    <property type="match status" value="1"/>
</dbReference>
<proteinExistence type="evidence at transcript level"/>
<feature type="chain" id="PRO_0000317061" description="Sterol regulatory element-binding protein 2">
    <location>
        <begin position="1"/>
        <end position="1133"/>
    </location>
</feature>
<feature type="chain" id="PRO_0000317062" description="Processed sterol regulatory element-binding protein 2" evidence="2">
    <location>
        <begin position="1"/>
        <end position="476"/>
    </location>
</feature>
<feature type="topological domain" description="Cytoplasmic" evidence="4">
    <location>
        <begin position="1"/>
        <end position="473"/>
    </location>
</feature>
<feature type="transmembrane region" description="Helical" evidence="4">
    <location>
        <begin position="474"/>
        <end position="494"/>
    </location>
</feature>
<feature type="topological domain" description="Lumenal" evidence="4">
    <location>
        <begin position="495"/>
        <end position="525"/>
    </location>
</feature>
<feature type="transmembrane region" description="Helical" evidence="4">
    <location>
        <begin position="526"/>
        <end position="546"/>
    </location>
</feature>
<feature type="topological domain" description="Cytoplasmic" evidence="4">
    <location>
        <begin position="547"/>
        <end position="1133"/>
    </location>
</feature>
<feature type="domain" description="bHLH" evidence="5">
    <location>
        <begin position="322"/>
        <end position="372"/>
    </location>
</feature>
<feature type="region of interest" description="Transcriptional activation (acidic)" evidence="1 2">
    <location>
        <begin position="1"/>
        <end position="50"/>
    </location>
</feature>
<feature type="region of interest" description="Disordered" evidence="6">
    <location>
        <begin position="56"/>
        <end position="136"/>
    </location>
</feature>
<feature type="region of interest" description="Interaction with LMNA" evidence="3">
    <location>
        <begin position="229"/>
        <end position="483"/>
    </location>
</feature>
<feature type="region of interest" description="Leucine-zipper">
    <location>
        <begin position="372"/>
        <end position="393"/>
    </location>
</feature>
<feature type="compositionally biased region" description="Gly residues" evidence="6">
    <location>
        <begin position="56"/>
        <end position="65"/>
    </location>
</feature>
<feature type="compositionally biased region" description="Low complexity" evidence="6">
    <location>
        <begin position="92"/>
        <end position="109"/>
    </location>
</feature>
<feature type="compositionally biased region" description="Pro residues" evidence="6">
    <location>
        <begin position="114"/>
        <end position="134"/>
    </location>
</feature>
<feature type="site" description="Cleavage; by caspase-3 and caspase-7" evidence="2">
    <location>
        <begin position="460"/>
        <end position="461"/>
    </location>
</feature>
<feature type="site" description="Cleavage; by MBTPS2" evidence="2">
    <location>
        <begin position="476"/>
        <end position="477"/>
    </location>
</feature>
<feature type="site" description="Cleavage; by MBTPS1" evidence="2">
    <location>
        <begin position="514"/>
        <end position="515"/>
    </location>
</feature>
<feature type="modified residue" description="Phosphoserine" evidence="2">
    <location>
        <position position="1090"/>
    </location>
</feature>
<feature type="cross-link" description="Glycyl lysine isopeptide (Lys-Gly) (interchain with G-Cter in SUMO2)" evidence="2">
    <location>
        <position position="456"/>
    </location>
</feature>
<organism>
    <name type="scientific">Rattus norvegicus</name>
    <name type="common">Rat</name>
    <dbReference type="NCBI Taxonomy" id="10116"/>
    <lineage>
        <taxon>Eukaryota</taxon>
        <taxon>Metazoa</taxon>
        <taxon>Chordata</taxon>
        <taxon>Craniata</taxon>
        <taxon>Vertebrata</taxon>
        <taxon>Euteleostomi</taxon>
        <taxon>Mammalia</taxon>
        <taxon>Eutheria</taxon>
        <taxon>Euarchontoglires</taxon>
        <taxon>Glires</taxon>
        <taxon>Rodentia</taxon>
        <taxon>Myomorpha</taxon>
        <taxon>Muroidea</taxon>
        <taxon>Muridae</taxon>
        <taxon>Murinae</taxon>
        <taxon>Rattus</taxon>
    </lineage>
</organism>
<gene>
    <name evidence="8" type="primary">Srebf2</name>
</gene>
<keyword id="KW-0010">Activator</keyword>
<keyword id="KW-0153">Cholesterol metabolism</keyword>
<keyword id="KW-0968">Cytoplasmic vesicle</keyword>
<keyword id="KW-0238">DNA-binding</keyword>
<keyword id="KW-0256">Endoplasmic reticulum</keyword>
<keyword id="KW-0333">Golgi apparatus</keyword>
<keyword id="KW-1017">Isopeptide bond</keyword>
<keyword id="KW-0443">Lipid metabolism</keyword>
<keyword id="KW-0472">Membrane</keyword>
<keyword id="KW-0539">Nucleus</keyword>
<keyword id="KW-0597">Phosphoprotein</keyword>
<keyword id="KW-1185">Reference proteome</keyword>
<keyword id="KW-0753">Steroid metabolism</keyword>
<keyword id="KW-1207">Sterol metabolism</keyword>
<keyword id="KW-0804">Transcription</keyword>
<keyword id="KW-0805">Transcription regulation</keyword>
<keyword id="KW-0812">Transmembrane</keyword>
<keyword id="KW-1133">Transmembrane helix</keyword>
<keyword id="KW-0832">Ubl conjugation</keyword>
<comment type="function">
    <molecule>Sterol regulatory element-binding protein 2</molecule>
    <text evidence="2">Precursor of the transcription factor form (Processed sterol regulatory element-binding protein 2), which is embedded in the endoplasmic reticulum membrane. Low sterol concentrations promote processing of this form, releasing the transcription factor form that translocates into the nucleus and activates transcription of genes involved in cholesterol biosynthesis.</text>
</comment>
<comment type="function">
    <molecule>Processed sterol regulatory element-binding protein 2</molecule>
    <text evidence="2">Key transcription factor that regulates expression of genes involved in cholesterol biosynthesis. Binds to the sterol regulatory element 1 (SRE-1) (5'-ATCACCCCAC-3'). Has dual sequence specificity binding to both an E-box motif (5'-ATCACGTGA-3') and to SRE-1 (5'-ATCACCCCAC-3'). Regulates transcription of genes related to cholesterol synthesis pathway. Regulates hepatic lipogenesis.</text>
</comment>
<comment type="activity regulation">
    <text evidence="3">Activation by cleavage is down-regulated upon activation of SIRT3-dependent PRKAA1/AMPK-alpha signaling cascade which leads to inhibition of ATP-consuming lipogenesis to restore cellular energy balance.</text>
</comment>
<comment type="subunit">
    <molecule>Processed sterol regulatory element-binding protein 2</molecule>
    <text evidence="3">Homodimer; efficient DNA binding of the soluble transcription factor fragment requires dimerization with another bHLH protein. Interacts with LMNA.</text>
</comment>
<comment type="subunit">
    <molecule>Sterol regulatory element-binding protein 2</molecule>
    <text evidence="2">Forms a tight complex with SCAP, the SCAP-SREBP complex, in the endoplasmic reticulum membrane and the Golgi apparatus. Interacts with PAQR3; the interaction anchors the SCAP-SREBP complex to the Golgi apparatus in low cholesterol conditions. Interacts (via C-terminal domain) with RNF139.</text>
</comment>
<comment type="subcellular location">
    <molecule>Sterol regulatory element-binding protein 2</molecule>
    <subcellularLocation>
        <location evidence="2">Endoplasmic reticulum membrane</location>
        <topology evidence="4">Multi-pass membrane protein</topology>
    </subcellularLocation>
    <subcellularLocation>
        <location evidence="2">Golgi apparatus membrane</location>
        <topology evidence="4">Multi-pass membrane protein</topology>
    </subcellularLocation>
    <subcellularLocation>
        <location evidence="2">Cytoplasmic vesicle</location>
        <location evidence="2">COPII-coated vesicle membrane</location>
        <topology evidence="4">Multi-pass membrane protein</topology>
    </subcellularLocation>
    <text evidence="2">At high sterol concentrations, the SCAP-SREBP is retained in the endoplasmic reticulum. Low sterol concentrations promote recruitment into COPII-coated vesicles and transport of the SCAP-SREBP to the Golgi, where it is processed.</text>
</comment>
<comment type="subcellular location">
    <molecule>Processed sterol regulatory element-binding protein 2</molecule>
    <subcellularLocation>
        <location evidence="2">Nucleus</location>
    </subcellularLocation>
    <text evidence="3">Transported into the nucleus with the help of importin-beta. Dimerization of the bHLH domain is a prerequisite for importin beta-dependent nuclear import.</text>
</comment>
<comment type="PTM">
    <molecule>Sterol regulatory element-binding protein 2</molecule>
    <text evidence="2">Processed in the Golgi apparatus, releasing the protein from the membrane. At low cholesterol the SCAP-SREBP complex is recruited into COPII vesicles for export from the endoplasmic reticulum. In the Golgi, complex SREBPs are cleaved sequentially by site-1 (MBTPS1, S1P) and site-2 (MBTPS2, S2P) proteases. The first cleavage by site-1 protease occurs within the luminal loop, the second cleavage by site-2 protease occurs within the first transmembrane domain, releasing the transcription factor from the Golgi membrane. Apoptosis triggers cleavage by the cysteine proteases caspase-3 and caspase-7. Cleavage and activation is induced by mediated cholesterol efflux.</text>
</comment>
<comment type="PTM">
    <text evidence="3">Phosphorylated by AMPK, leading to suppress protein processing and nuclear translocation, and repress target gene expression.</text>
</comment>
<comment type="PTM">
    <molecule>Sterol regulatory element-binding protein 2</molecule>
    <text evidence="2">SCAP-free SREBF2 is ubiquitinated by the BCR(ARMC5) complex, leading to its degradation.</text>
</comment>
<comment type="PTM">
    <molecule>Processed sterol regulatory element-binding protein 2</molecule>
    <text evidence="2">Ubiquitinated; the nuclear form has a rapid turnover and is rapidly ubiquitinated and degraded by the proteasome in the nucleus.</text>
</comment>
<comment type="similarity">
    <text evidence="7">Belongs to the SREBP family.</text>
</comment>
<reference key="1">
    <citation type="journal article" date="2004" name="Genome Res.">
        <title>The status, quality, and expansion of the NIH full-length cDNA project: the Mammalian Gene Collection (MGC).</title>
        <authorList>
            <consortium name="The MGC Project Team"/>
        </authorList>
    </citation>
    <scope>NUCLEOTIDE SEQUENCE [LARGE SCALE MRNA]</scope>
    <source>
        <tissue>Prostate</tissue>
    </source>
</reference>
<sequence>MDENSELGGLETMETLTELGDELTLGDIDEMLQFVSNQVGEFSDLFSEQLCSSFPGGGGGSGSGGTSNNSSGRGTSGGAADPAVQRSFSQVPLSTFSPSSTSPQAPALQVKVSPTPPRATPVLQPRPQPQPQPPAQLQQQTVMITPTFSTAPQTRIIQQPLIYQNAATSFQVLQPQVQSLVTSSQVQPVTIQQQVQTVQAQRVLTQTANGTLQTLAPATVQTVATPQVQQVPVLVQPQIIKTDSLVLTTLKTDGSPVMAAVQNPALTALTAPIQTAALQVPTLVGSNGAILTTMPVMMGQEKVPIKQVPGGVKQLEPPKEGERRTTHNIIEKRYRSSINDKIIELKDLVMGTDAKMHKSGVLRKAIDYIKYLQQVNHKLRQENMVLKLANQKNKLLKGIDLGSLVDSDVDLKIDDFNQNVLLMSPPASDSGSQAGFSPYSIDSEPGSPLLDDAKVKDEPDSPPVALGMVDRSRILLCVLTFLGLSFNPLTSLLQWGGAHNPDQHPYSGSGRNVLSLESGSGGWFDWMMPTLLLWLLNGVIVLSVFVKLLVHGEPVIRPHSRSSVTFWRHRKQADLDLAKGDFAAAAANLQTCLSVLGRALPTSRLDLACSLSWNVIRYSLQKLRLVRWLLKKVFQRWRATPATAAGFEDEAKSSARDAALAYHRLHQLHITGKLPAGSACSDVHMALCAVNLAECAEEKIPPSTLVEIHLTAAMGLKTRCGGKLGFLASYFLNRAQSLCGPEHSAVPDSLRWLCHPLGQKFFMERSWSIKSAAKDSLYCAQRNPADPIAQVHQAFCKHLLERAVEALVKPQAKKKAGDREEESCEFSSALEFLKLLHSFVDSVGFVASPFSSSSVLRSALGPDVVCRWWTSAITVAISWLQGDDAAVRSHFTEVERVPKALEVTESPLVKAVFYACRAMHASLSGKADGQQNSFCHCERASGHLWSSLNVSGTTSDPSLNHVVQLLTCDLLLSLRTTLWQKQASASQLLGETYHASGTELAGFQRDLGSLRRLAHSFRPAYRKVFLHEATVRLMAGASPTRTHQLLEHSLRRRTTQNTKHGEVDTWPGQRERATAILLACRHLPLSFLSSPGQRAVLLAEAARTLEKVGDRRSCSDCQQMIVKLGGGTAIAAS</sequence>